<name>IF2_BURCM</name>
<dbReference type="EMBL" id="CP000440">
    <property type="protein sequence ID" value="ABI86940.1"/>
    <property type="molecule type" value="Genomic_DNA"/>
</dbReference>
<dbReference type="RefSeq" id="WP_011656689.1">
    <property type="nucleotide sequence ID" value="NC_008390.1"/>
</dbReference>
<dbReference type="SMR" id="Q0BFY3"/>
<dbReference type="GeneID" id="93083217"/>
<dbReference type="KEGG" id="bam:Bamb_1382"/>
<dbReference type="PATRIC" id="fig|339670.21.peg.160"/>
<dbReference type="eggNOG" id="COG0532">
    <property type="taxonomic scope" value="Bacteria"/>
</dbReference>
<dbReference type="Proteomes" id="UP000000662">
    <property type="component" value="Chromosome 1"/>
</dbReference>
<dbReference type="GO" id="GO:0005829">
    <property type="term" value="C:cytosol"/>
    <property type="evidence" value="ECO:0007669"/>
    <property type="project" value="TreeGrafter"/>
</dbReference>
<dbReference type="GO" id="GO:0005525">
    <property type="term" value="F:GTP binding"/>
    <property type="evidence" value="ECO:0007669"/>
    <property type="project" value="UniProtKB-KW"/>
</dbReference>
<dbReference type="GO" id="GO:0003924">
    <property type="term" value="F:GTPase activity"/>
    <property type="evidence" value="ECO:0007669"/>
    <property type="project" value="UniProtKB-UniRule"/>
</dbReference>
<dbReference type="GO" id="GO:0003743">
    <property type="term" value="F:translation initiation factor activity"/>
    <property type="evidence" value="ECO:0007669"/>
    <property type="project" value="UniProtKB-UniRule"/>
</dbReference>
<dbReference type="CDD" id="cd01887">
    <property type="entry name" value="IF2_eIF5B"/>
    <property type="match status" value="1"/>
</dbReference>
<dbReference type="CDD" id="cd03702">
    <property type="entry name" value="IF2_mtIF2_II"/>
    <property type="match status" value="1"/>
</dbReference>
<dbReference type="CDD" id="cd03692">
    <property type="entry name" value="mtIF2_IVc"/>
    <property type="match status" value="1"/>
</dbReference>
<dbReference type="FunFam" id="2.40.30.10:FF:000007">
    <property type="entry name" value="Translation initiation factor IF-2"/>
    <property type="match status" value="1"/>
</dbReference>
<dbReference type="FunFam" id="2.40.30.10:FF:000008">
    <property type="entry name" value="Translation initiation factor IF-2"/>
    <property type="match status" value="1"/>
</dbReference>
<dbReference type="FunFam" id="3.40.50.10050:FF:000001">
    <property type="entry name" value="Translation initiation factor IF-2"/>
    <property type="match status" value="1"/>
</dbReference>
<dbReference type="FunFam" id="3.40.50.300:FF:000019">
    <property type="entry name" value="Translation initiation factor IF-2"/>
    <property type="match status" value="1"/>
</dbReference>
<dbReference type="Gene3D" id="3.40.50.300">
    <property type="entry name" value="P-loop containing nucleotide triphosphate hydrolases"/>
    <property type="match status" value="1"/>
</dbReference>
<dbReference type="Gene3D" id="3.30.56.50">
    <property type="entry name" value="Putative DNA-binding domain, N-terminal subdomain of bacterial translation initiation factor IF2"/>
    <property type="match status" value="1"/>
</dbReference>
<dbReference type="Gene3D" id="2.40.30.10">
    <property type="entry name" value="Translation factors"/>
    <property type="match status" value="2"/>
</dbReference>
<dbReference type="Gene3D" id="3.40.50.10050">
    <property type="entry name" value="Translation initiation factor IF- 2, domain 3"/>
    <property type="match status" value="1"/>
</dbReference>
<dbReference type="HAMAP" id="MF_00100_B">
    <property type="entry name" value="IF_2_B"/>
    <property type="match status" value="1"/>
</dbReference>
<dbReference type="InterPro" id="IPR009061">
    <property type="entry name" value="DNA-bd_dom_put_sf"/>
</dbReference>
<dbReference type="InterPro" id="IPR053905">
    <property type="entry name" value="EF-G-like_DII"/>
</dbReference>
<dbReference type="InterPro" id="IPR013575">
    <property type="entry name" value="IF2_assoc_dom_bac"/>
</dbReference>
<dbReference type="InterPro" id="IPR044145">
    <property type="entry name" value="IF2_II"/>
</dbReference>
<dbReference type="InterPro" id="IPR006847">
    <property type="entry name" value="IF2_N"/>
</dbReference>
<dbReference type="InterPro" id="IPR027417">
    <property type="entry name" value="P-loop_NTPase"/>
</dbReference>
<dbReference type="InterPro" id="IPR005225">
    <property type="entry name" value="Small_GTP-bd"/>
</dbReference>
<dbReference type="InterPro" id="IPR000795">
    <property type="entry name" value="T_Tr_GTP-bd_dom"/>
</dbReference>
<dbReference type="InterPro" id="IPR000178">
    <property type="entry name" value="TF_IF2_bacterial-like"/>
</dbReference>
<dbReference type="InterPro" id="IPR015760">
    <property type="entry name" value="TIF_IF2"/>
</dbReference>
<dbReference type="InterPro" id="IPR023115">
    <property type="entry name" value="TIF_IF2_dom3"/>
</dbReference>
<dbReference type="InterPro" id="IPR036925">
    <property type="entry name" value="TIF_IF2_dom3_sf"/>
</dbReference>
<dbReference type="InterPro" id="IPR009000">
    <property type="entry name" value="Transl_B-barrel_sf"/>
</dbReference>
<dbReference type="NCBIfam" id="TIGR00487">
    <property type="entry name" value="IF-2"/>
    <property type="match status" value="1"/>
</dbReference>
<dbReference type="NCBIfam" id="TIGR00231">
    <property type="entry name" value="small_GTP"/>
    <property type="match status" value="1"/>
</dbReference>
<dbReference type="PANTHER" id="PTHR43381:SF5">
    <property type="entry name" value="TR-TYPE G DOMAIN-CONTAINING PROTEIN"/>
    <property type="match status" value="1"/>
</dbReference>
<dbReference type="PANTHER" id="PTHR43381">
    <property type="entry name" value="TRANSLATION INITIATION FACTOR IF-2-RELATED"/>
    <property type="match status" value="1"/>
</dbReference>
<dbReference type="Pfam" id="PF22042">
    <property type="entry name" value="EF-G_D2"/>
    <property type="match status" value="1"/>
</dbReference>
<dbReference type="Pfam" id="PF00009">
    <property type="entry name" value="GTP_EFTU"/>
    <property type="match status" value="1"/>
</dbReference>
<dbReference type="Pfam" id="PF11987">
    <property type="entry name" value="IF-2"/>
    <property type="match status" value="1"/>
</dbReference>
<dbReference type="Pfam" id="PF08364">
    <property type="entry name" value="IF2_assoc"/>
    <property type="match status" value="1"/>
</dbReference>
<dbReference type="Pfam" id="PF04760">
    <property type="entry name" value="IF2_N"/>
    <property type="match status" value="2"/>
</dbReference>
<dbReference type="SUPFAM" id="SSF52156">
    <property type="entry name" value="Initiation factor IF2/eIF5b, domain 3"/>
    <property type="match status" value="1"/>
</dbReference>
<dbReference type="SUPFAM" id="SSF52540">
    <property type="entry name" value="P-loop containing nucleoside triphosphate hydrolases"/>
    <property type="match status" value="1"/>
</dbReference>
<dbReference type="SUPFAM" id="SSF46955">
    <property type="entry name" value="Putative DNA-binding domain"/>
    <property type="match status" value="1"/>
</dbReference>
<dbReference type="SUPFAM" id="SSF50447">
    <property type="entry name" value="Translation proteins"/>
    <property type="match status" value="2"/>
</dbReference>
<dbReference type="PROSITE" id="PS51722">
    <property type="entry name" value="G_TR_2"/>
    <property type="match status" value="1"/>
</dbReference>
<dbReference type="PROSITE" id="PS01176">
    <property type="entry name" value="IF2"/>
    <property type="match status" value="1"/>
</dbReference>
<evidence type="ECO:0000250" key="1"/>
<evidence type="ECO:0000255" key="2">
    <source>
        <dbReference type="HAMAP-Rule" id="MF_00100"/>
    </source>
</evidence>
<evidence type="ECO:0000256" key="3">
    <source>
        <dbReference type="SAM" id="MobiDB-lite"/>
    </source>
</evidence>
<organism>
    <name type="scientific">Burkholderia ambifaria (strain ATCC BAA-244 / DSM 16087 / CCUG 44356 / LMG 19182 / AMMD)</name>
    <name type="common">Burkholderia cepacia (strain AMMD)</name>
    <dbReference type="NCBI Taxonomy" id="339670"/>
    <lineage>
        <taxon>Bacteria</taxon>
        <taxon>Pseudomonadati</taxon>
        <taxon>Pseudomonadota</taxon>
        <taxon>Betaproteobacteria</taxon>
        <taxon>Burkholderiales</taxon>
        <taxon>Burkholderiaceae</taxon>
        <taxon>Burkholderia</taxon>
        <taxon>Burkholderia cepacia complex</taxon>
    </lineage>
</organism>
<comment type="function">
    <text evidence="2">One of the essential components for the initiation of protein synthesis. Protects formylmethionyl-tRNA from spontaneous hydrolysis and promotes its binding to the 30S ribosomal subunits. Also involved in the hydrolysis of GTP during the formation of the 70S ribosomal complex.</text>
</comment>
<comment type="subcellular location">
    <subcellularLocation>
        <location evidence="2">Cytoplasm</location>
    </subcellularLocation>
</comment>
<comment type="similarity">
    <text evidence="2">Belongs to the TRAFAC class translation factor GTPase superfamily. Classic translation factor GTPase family. IF-2 subfamily.</text>
</comment>
<protein>
    <recommendedName>
        <fullName evidence="2">Translation initiation factor IF-2</fullName>
    </recommendedName>
</protein>
<sequence>MASNNVAQFAAELKMPAGVLLEQLQAAGVQKASEDDALSEADKARLLDHLRKSHGATDGDKRKITLTRKHTSEIKQSDATGKARTIQVEVRKKRTFVKRDDVAEGAEQGQAQVAEADDDAELKRREEEARREAELLEKQAQELRERQERLEREEAERRAREEAAEAQRRRAEEEAAAKRAAAAAVEAQQVAAQQAAEAQQETAGAQSAQDEARAAAERAAQREAAKKAEDAAREAADKTRAEQEEIRKRREAAEAEARAIREMMNTPRKAMVKAVEPPKPVEPPKPVEAKGTLHKPAKPAGASAARPAVKKPAGAAPATTAPAGAGDRNKKPGGGKGGWQDDAAKRRGIKTRGDSSGGVDRGWRGGPKGRGRHQDSASTFQAPTEPIVREVHVPETVSVADLAHKMSIKASEVIKVMMKMGQMVTINQVLDQETAMIVVEELGHRAVAAKLDDPEALLVEGETTTDAEQLPRPPVVTVMGHVDHGKTSLLDHIRRAKVAAGEAGGITQHIGAYHVETPRGVITFLDTPGHEAFTAMRARGAKATDIVVLVVAADDGVMPQTKEAIAHAKAGGVPIVVAINKIDKPEANPDRVKQELVAEGVVPEEYGGDSPFVPVSAKTGVGIDDLLENVLLQAEVLELKAPIEAPAKGIVIEAKLDKGKGPVATILVQSGTLNRGDVVLAGSAYGRVRAMLDENGKPTKEAGPSIPVEIQGLSEVPGAGEEVIVLPDERKAREIALFRQGKFRDVKLAKQQAAKLESMLEQMGEGEVQNLPLIIKADVQGSQEALVQSLLKLSTDEVRVQIVHSAVGGISENDVNLATASKAVIIGFNTRADAQARKLAESNGIDIRYYNIIYDAVDEVKAAMSGMLAPEKREVITGMVEVRQVFKVPKIGTVAGCMVTDGIVKRSSSVRVLRNNVVIFTGELESLKRFKDDVKEVKQGFECGMSVKNFNDVTEGDQFEVFEVTEVARTL</sequence>
<reference key="1">
    <citation type="submission" date="2006-08" db="EMBL/GenBank/DDBJ databases">
        <title>Complete sequence of chromosome 1 of Burkholderia cepacia AMMD.</title>
        <authorList>
            <person name="Copeland A."/>
            <person name="Lucas S."/>
            <person name="Lapidus A."/>
            <person name="Barry K."/>
            <person name="Detter J.C."/>
            <person name="Glavina del Rio T."/>
            <person name="Hammon N."/>
            <person name="Israni S."/>
            <person name="Pitluck S."/>
            <person name="Bruce D."/>
            <person name="Chain P."/>
            <person name="Malfatti S."/>
            <person name="Shin M."/>
            <person name="Vergez L."/>
            <person name="Schmutz J."/>
            <person name="Larimer F."/>
            <person name="Land M."/>
            <person name="Hauser L."/>
            <person name="Kyrpides N."/>
            <person name="Kim E."/>
            <person name="Parke J."/>
            <person name="Coenye T."/>
            <person name="Konstantinidis K."/>
            <person name="Ramette A."/>
            <person name="Tiedje J."/>
            <person name="Richardson P."/>
        </authorList>
    </citation>
    <scope>NUCLEOTIDE SEQUENCE [LARGE SCALE GENOMIC DNA]</scope>
    <source>
        <strain>ATCC BAA-244 / DSM 16087 / CCUG 44356 / LMG 19182 / AMMD</strain>
    </source>
</reference>
<gene>
    <name evidence="2" type="primary">infB</name>
    <name type="ordered locus">Bamb_1382</name>
</gene>
<feature type="chain" id="PRO_1000008210" description="Translation initiation factor IF-2">
    <location>
        <begin position="1"/>
        <end position="971"/>
    </location>
</feature>
<feature type="domain" description="tr-type G">
    <location>
        <begin position="471"/>
        <end position="640"/>
    </location>
</feature>
<feature type="region of interest" description="Disordered" evidence="3">
    <location>
        <begin position="49"/>
        <end position="86"/>
    </location>
</feature>
<feature type="region of interest" description="Disordered" evidence="3">
    <location>
        <begin position="101"/>
        <end position="385"/>
    </location>
</feature>
<feature type="region of interest" description="G1" evidence="1">
    <location>
        <begin position="480"/>
        <end position="487"/>
    </location>
</feature>
<feature type="region of interest" description="G2" evidence="1">
    <location>
        <begin position="505"/>
        <end position="509"/>
    </location>
</feature>
<feature type="region of interest" description="G3" evidence="1">
    <location>
        <begin position="526"/>
        <end position="529"/>
    </location>
</feature>
<feature type="region of interest" description="G4" evidence="1">
    <location>
        <begin position="580"/>
        <end position="583"/>
    </location>
</feature>
<feature type="region of interest" description="G5" evidence="1">
    <location>
        <begin position="616"/>
        <end position="618"/>
    </location>
</feature>
<feature type="compositionally biased region" description="Basic and acidic residues" evidence="3">
    <location>
        <begin position="49"/>
        <end position="63"/>
    </location>
</feature>
<feature type="compositionally biased region" description="Low complexity" evidence="3">
    <location>
        <begin position="105"/>
        <end position="114"/>
    </location>
</feature>
<feature type="compositionally biased region" description="Basic and acidic residues" evidence="3">
    <location>
        <begin position="121"/>
        <end position="177"/>
    </location>
</feature>
<feature type="compositionally biased region" description="Low complexity" evidence="3">
    <location>
        <begin position="178"/>
        <end position="209"/>
    </location>
</feature>
<feature type="compositionally biased region" description="Basic and acidic residues" evidence="3">
    <location>
        <begin position="210"/>
        <end position="261"/>
    </location>
</feature>
<feature type="compositionally biased region" description="Pro residues" evidence="3">
    <location>
        <begin position="277"/>
        <end position="286"/>
    </location>
</feature>
<feature type="compositionally biased region" description="Low complexity" evidence="3">
    <location>
        <begin position="298"/>
        <end position="325"/>
    </location>
</feature>
<feature type="compositionally biased region" description="Gly residues" evidence="3">
    <location>
        <begin position="355"/>
        <end position="368"/>
    </location>
</feature>
<feature type="binding site" evidence="2">
    <location>
        <begin position="480"/>
        <end position="487"/>
    </location>
    <ligand>
        <name>GTP</name>
        <dbReference type="ChEBI" id="CHEBI:37565"/>
    </ligand>
</feature>
<feature type="binding site" evidence="2">
    <location>
        <begin position="526"/>
        <end position="530"/>
    </location>
    <ligand>
        <name>GTP</name>
        <dbReference type="ChEBI" id="CHEBI:37565"/>
    </ligand>
</feature>
<feature type="binding site" evidence="2">
    <location>
        <begin position="580"/>
        <end position="583"/>
    </location>
    <ligand>
        <name>GTP</name>
        <dbReference type="ChEBI" id="CHEBI:37565"/>
    </ligand>
</feature>
<accession>Q0BFY3</accession>
<proteinExistence type="inferred from homology"/>
<keyword id="KW-0963">Cytoplasm</keyword>
<keyword id="KW-0342">GTP-binding</keyword>
<keyword id="KW-0396">Initiation factor</keyword>
<keyword id="KW-0547">Nucleotide-binding</keyword>
<keyword id="KW-0648">Protein biosynthesis</keyword>